<protein>
    <recommendedName>
        <fullName>Protein SrpB</fullName>
    </recommendedName>
</protein>
<proteinExistence type="evidence at transcript level"/>
<name>SRPB_SYNE7</name>
<keyword id="KW-1003">Cell membrane</keyword>
<keyword id="KW-0472">Membrane</keyword>
<keyword id="KW-0614">Plasmid</keyword>
<keyword id="KW-1185">Reference proteome</keyword>
<keyword id="KW-0346">Stress response</keyword>
<keyword id="KW-0812">Transmembrane</keyword>
<keyword id="KW-1133">Transmembrane helix</keyword>
<geneLocation type="plasmid">
    <name>pANL</name>
</geneLocation>
<evidence type="ECO:0000255" key="1"/>
<evidence type="ECO:0000305" key="2"/>
<dbReference type="EMBL" id="U20224">
    <property type="protein sequence ID" value="AAA85848.1"/>
    <property type="molecule type" value="Genomic_DNA"/>
</dbReference>
<dbReference type="EMBL" id="AF441790">
    <property type="protein sequence ID" value="AAM81172.1"/>
    <property type="molecule type" value="Genomic_DNA"/>
</dbReference>
<dbReference type="EMBL" id="CP000101">
    <property type="protein sequence ID" value="ABB58650.1"/>
    <property type="molecule type" value="Genomic_DNA"/>
</dbReference>
<dbReference type="RefSeq" id="NP_665785.1">
    <property type="nucleotide sequence ID" value="NC_004073.2"/>
</dbReference>
<dbReference type="RefSeq" id="WP_011055162.1">
    <property type="nucleotide sequence ID" value="NZ_JACJTX010000007.1"/>
</dbReference>
<dbReference type="TCDB" id="9.B.20.2.1">
    <property type="family name" value="the putative mg(2+) transporter-c (mgtc) family"/>
</dbReference>
<dbReference type="PaxDb" id="1140-Synpcc7942_B2621"/>
<dbReference type="KEGG" id="syf:Synpcc7942_B2621"/>
<dbReference type="eggNOG" id="COG1285">
    <property type="taxonomic scope" value="Bacteria"/>
</dbReference>
<dbReference type="HOGENOM" id="CLU_079292_1_1_3"/>
<dbReference type="OrthoDB" id="9811198at2"/>
<dbReference type="BioCyc" id="SYNEL:SYNPCC7942_B2621-MONOMER"/>
<dbReference type="Proteomes" id="UP000889800">
    <property type="component" value="Plasmid pANL"/>
</dbReference>
<dbReference type="GO" id="GO:0005886">
    <property type="term" value="C:plasma membrane"/>
    <property type="evidence" value="ECO:0007669"/>
    <property type="project" value="UniProtKB-SubCell"/>
</dbReference>
<dbReference type="InterPro" id="IPR003416">
    <property type="entry name" value="MgtC/SapB/SrpB/YhiD_fam"/>
</dbReference>
<dbReference type="InterPro" id="IPR049177">
    <property type="entry name" value="MgtC_SapB_SrpB_YhiD_N"/>
</dbReference>
<dbReference type="PANTHER" id="PTHR33778:SF1">
    <property type="entry name" value="MAGNESIUM TRANSPORTER YHID-RELATED"/>
    <property type="match status" value="1"/>
</dbReference>
<dbReference type="PANTHER" id="PTHR33778">
    <property type="entry name" value="PROTEIN MGTC"/>
    <property type="match status" value="1"/>
</dbReference>
<dbReference type="Pfam" id="PF02308">
    <property type="entry name" value="MgtC"/>
    <property type="match status" value="1"/>
</dbReference>
<dbReference type="PRINTS" id="PR01837">
    <property type="entry name" value="MGTCSAPBPROT"/>
</dbReference>
<accession>Q55026</accession>
<accession>Q7BA83</accession>
<feature type="chain" id="PRO_0000202031" description="Protein SrpB">
    <location>
        <begin position="1"/>
        <end position="182"/>
    </location>
</feature>
<feature type="transmembrane region" description="Helical" evidence="1">
    <location>
        <begin position="11"/>
        <end position="31"/>
    </location>
</feature>
<feature type="transmembrane region" description="Helical" evidence="1">
    <location>
        <begin position="43"/>
        <end position="63"/>
    </location>
</feature>
<feature type="transmembrane region" description="Helical" evidence="1">
    <location>
        <begin position="73"/>
        <end position="93"/>
    </location>
</feature>
<feature type="transmembrane region" description="Helical" evidence="1">
    <location>
        <begin position="116"/>
        <end position="136"/>
    </location>
</feature>
<gene>
    <name type="primary">srpB</name>
    <name type="ordered locus">Synpcc7942_B2621</name>
    <name type="ORF">pANL47</name>
</gene>
<organism>
    <name type="scientific">Synechococcus elongatus (strain ATCC 33912 / PCC 7942 / FACHB-805)</name>
    <name type="common">Anacystis nidulans R2</name>
    <dbReference type="NCBI Taxonomy" id="1140"/>
    <lineage>
        <taxon>Bacteria</taxon>
        <taxon>Bacillati</taxon>
        <taxon>Cyanobacteriota</taxon>
        <taxon>Cyanophyceae</taxon>
        <taxon>Synechococcales</taxon>
        <taxon>Synechococcaceae</taxon>
        <taxon>Synechococcus</taxon>
    </lineage>
</organism>
<sequence length="182" mass="19524">MNVIFLPQGDWLGLSFRLLLAMLVGAVIGLNRQRGGRPAGMRTFTLVAMGSALFVMVPIQAEGDSSFAAINALSRTVQGVAAGVGFLGAGLILQRAPKTKRSGRPRVSGLTTAATIWITAALGAVIGCGLWQLGLIGTFFTLLTLSGFKRLQRIAWLRQSWERLIAWEAKTLPPDAEEEDDD</sequence>
<comment type="subcellular location">
    <subcellularLocation>
        <location evidence="2">Cell membrane</location>
        <topology evidence="2">Multi-pass membrane protein</topology>
    </subcellularLocation>
</comment>
<comment type="induction">
    <text>By sulfur deprivation.</text>
</comment>
<comment type="similarity">
    <text evidence="2">Belongs to the MgtC/SapB family.</text>
</comment>
<reference key="1">
    <citation type="journal article" date="1995" name="J. Bacteriol.">
        <title>Genes encoded on a cyanobacterial plasmid are transcriptionally regulated by sulfur availability and CysR.</title>
        <authorList>
            <person name="Nicholson M.L."/>
            <person name="Laudenbach D.E."/>
        </authorList>
    </citation>
    <scope>NUCLEOTIDE SEQUENCE [GENOMIC DNA]</scope>
    <source>
        <strain>ATCC 33912 / PCC 7942 / FACHB-805</strain>
        <plasmid>pANL</plasmid>
    </source>
</reference>
<reference key="2">
    <citation type="submission" date="2004-05" db="EMBL/GenBank/DDBJ databases">
        <title>pANL, the large plasmid of Synechococcus elongatus PCC 7942.</title>
        <authorList>
            <person name="Holtman C.K."/>
            <person name="Chen Y."/>
            <person name="Sandoval P."/>
            <person name="Socias T."/>
            <person name="Mohler B.J."/>
            <person name="Youderian P."/>
            <person name="Golden S.S."/>
        </authorList>
    </citation>
    <scope>NUCLEOTIDE SEQUENCE [GENOMIC DNA]</scope>
    <source>
        <strain>ATCC 33912 / PCC 7942 / FACHB-805</strain>
        <plasmid>pANL</plasmid>
    </source>
</reference>
<reference key="3">
    <citation type="submission" date="2005-08" db="EMBL/GenBank/DDBJ databases">
        <title>Complete sequence of plasmid 1 of Synechococcus elongatus PCC 7942.</title>
        <authorList>
            <consortium name="US DOE Joint Genome Institute"/>
            <person name="Copeland A."/>
            <person name="Lucas S."/>
            <person name="Lapidus A."/>
            <person name="Barry K."/>
            <person name="Detter J.C."/>
            <person name="Glavina T."/>
            <person name="Hammon N."/>
            <person name="Israni S."/>
            <person name="Pitluck S."/>
            <person name="Schmutz J."/>
            <person name="Larimer F."/>
            <person name="Land M."/>
            <person name="Kyrpides N."/>
            <person name="Lykidis A."/>
            <person name="Golden S."/>
            <person name="Richardson P."/>
        </authorList>
    </citation>
    <scope>NUCLEOTIDE SEQUENCE [LARGE SCALE GENOMIC DNA]</scope>
    <source>
        <strain>ATCC 33912 / PCC 7942 / FACHB-805</strain>
        <plasmid>pANL</plasmid>
    </source>
</reference>